<keyword id="KW-0274">FAD</keyword>
<keyword id="KW-0285">Flavoprotein</keyword>
<keyword id="KW-0521">NADP</keyword>
<keyword id="KW-0560">Oxidoreductase</keyword>
<keyword id="KW-1185">Reference proteome</keyword>
<evidence type="ECO:0000255" key="1">
    <source>
        <dbReference type="HAMAP-Rule" id="MF_01685"/>
    </source>
</evidence>
<evidence type="ECO:0000305" key="2"/>
<organism>
    <name type="scientific">Leuconostoc citreum (strain KM20)</name>
    <dbReference type="NCBI Taxonomy" id="349519"/>
    <lineage>
        <taxon>Bacteria</taxon>
        <taxon>Bacillati</taxon>
        <taxon>Bacillota</taxon>
        <taxon>Bacilli</taxon>
        <taxon>Lactobacillales</taxon>
        <taxon>Lactobacillaceae</taxon>
        <taxon>Leuconostoc</taxon>
    </lineage>
</organism>
<feature type="chain" id="PRO_0000364867" description="Ferredoxin--NADP reductase">
    <location>
        <begin position="1"/>
        <end position="339"/>
    </location>
</feature>
<feature type="binding site" evidence="1">
    <location>
        <position position="35"/>
    </location>
    <ligand>
        <name>FAD</name>
        <dbReference type="ChEBI" id="CHEBI:57692"/>
    </ligand>
</feature>
<feature type="binding site" evidence="1">
    <location>
        <position position="43"/>
    </location>
    <ligand>
        <name>FAD</name>
        <dbReference type="ChEBI" id="CHEBI:57692"/>
    </ligand>
</feature>
<feature type="binding site" evidence="1">
    <location>
        <position position="48"/>
    </location>
    <ligand>
        <name>FAD</name>
        <dbReference type="ChEBI" id="CHEBI:57692"/>
    </ligand>
</feature>
<feature type="binding site" evidence="1">
    <location>
        <position position="88"/>
    </location>
    <ligand>
        <name>FAD</name>
        <dbReference type="ChEBI" id="CHEBI:57692"/>
    </ligand>
</feature>
<feature type="binding site" evidence="1">
    <location>
        <position position="122"/>
    </location>
    <ligand>
        <name>FAD</name>
        <dbReference type="ChEBI" id="CHEBI:57692"/>
    </ligand>
</feature>
<feature type="binding site" evidence="1">
    <location>
        <position position="287"/>
    </location>
    <ligand>
        <name>FAD</name>
        <dbReference type="ChEBI" id="CHEBI:57692"/>
    </ligand>
</feature>
<feature type="binding site" evidence="1">
    <location>
        <position position="327"/>
    </location>
    <ligand>
        <name>FAD</name>
        <dbReference type="ChEBI" id="CHEBI:57692"/>
    </ligand>
</feature>
<accession>B1MX70</accession>
<gene>
    <name type="ordered locus">LCK_00289</name>
</gene>
<reference key="1">
    <citation type="journal article" date="2008" name="J. Bacteriol.">
        <title>Complete genome sequence of Leuconostoc citreum KM20.</title>
        <authorList>
            <person name="Kim J.F."/>
            <person name="Jeong H."/>
            <person name="Lee J.-S."/>
            <person name="Choi S.-H."/>
            <person name="Ha M."/>
            <person name="Hur C.-G."/>
            <person name="Kim J.-S."/>
            <person name="Lee S."/>
            <person name="Park H.-S."/>
            <person name="Park Y.-H."/>
            <person name="Oh T.K."/>
        </authorList>
    </citation>
    <scope>NUCLEOTIDE SEQUENCE [LARGE SCALE GENOMIC DNA]</scope>
    <source>
        <strain>KM20</strain>
    </source>
</reference>
<name>FENR_LEUCK</name>
<sequence>MAQEIYDIAIIGGGPVGMFAAFYAGLRDTKVILLESLATLGGQVTSLYPEKTILDVAGFSATKGTDFIAALSQQLQRFPVDIRTQTTVVNLEKSGNLFTVTTNNGTFIQAKTVIVATGKGAFEPRKIQVAGVDNLVGQGVHYFIKNKHDFDNHHIAIAGGGDSAVDMATMLSHIAAETTLIHRRDNFRAMEQSVKTLMASKVIRETPKKILSVSKQPDGRLKLRLAHVKDNQQVNDIIVDDLIINYGFISENKTIQAWAVQPKLAGQVFAVNQTLETNVPGLFVIGDASHYIGKADLIAIGLGEAPSAVNAAIRCFDPNRGGPGHSSSMVLKDTIVRND</sequence>
<dbReference type="EC" id="1.18.1.2" evidence="1"/>
<dbReference type="EMBL" id="DQ489736">
    <property type="protein sequence ID" value="ACA82122.1"/>
    <property type="status" value="ALT_INIT"/>
    <property type="molecule type" value="Genomic_DNA"/>
</dbReference>
<dbReference type="RefSeq" id="WP_041761857.1">
    <property type="nucleotide sequence ID" value="NC_010471.1"/>
</dbReference>
<dbReference type="SMR" id="B1MX70"/>
<dbReference type="STRING" id="349519.LCK_00289"/>
<dbReference type="KEGG" id="lci:LCK_00289"/>
<dbReference type="eggNOG" id="COG0492">
    <property type="taxonomic scope" value="Bacteria"/>
</dbReference>
<dbReference type="HOGENOM" id="CLU_031864_5_5_9"/>
<dbReference type="Proteomes" id="UP000002166">
    <property type="component" value="Chromosome"/>
</dbReference>
<dbReference type="GO" id="GO:0004324">
    <property type="term" value="F:ferredoxin-NADP+ reductase activity"/>
    <property type="evidence" value="ECO:0007669"/>
    <property type="project" value="UniProtKB-UniRule"/>
</dbReference>
<dbReference type="GO" id="GO:0050660">
    <property type="term" value="F:flavin adenine dinucleotide binding"/>
    <property type="evidence" value="ECO:0007669"/>
    <property type="project" value="UniProtKB-UniRule"/>
</dbReference>
<dbReference type="GO" id="GO:0050661">
    <property type="term" value="F:NADP binding"/>
    <property type="evidence" value="ECO:0007669"/>
    <property type="project" value="UniProtKB-UniRule"/>
</dbReference>
<dbReference type="Gene3D" id="3.50.50.60">
    <property type="entry name" value="FAD/NAD(P)-binding domain"/>
    <property type="match status" value="2"/>
</dbReference>
<dbReference type="HAMAP" id="MF_01685">
    <property type="entry name" value="FENR2"/>
    <property type="match status" value="1"/>
</dbReference>
<dbReference type="InterPro" id="IPR036188">
    <property type="entry name" value="FAD/NAD-bd_sf"/>
</dbReference>
<dbReference type="InterPro" id="IPR023753">
    <property type="entry name" value="FAD/NAD-binding_dom"/>
</dbReference>
<dbReference type="InterPro" id="IPR022890">
    <property type="entry name" value="Fd--NADP_Rdtase_type_2"/>
</dbReference>
<dbReference type="InterPro" id="IPR050097">
    <property type="entry name" value="Ferredoxin-NADP_redctase_2"/>
</dbReference>
<dbReference type="PANTHER" id="PTHR48105">
    <property type="entry name" value="THIOREDOXIN REDUCTASE 1-RELATED-RELATED"/>
    <property type="match status" value="1"/>
</dbReference>
<dbReference type="Pfam" id="PF07992">
    <property type="entry name" value="Pyr_redox_2"/>
    <property type="match status" value="1"/>
</dbReference>
<dbReference type="PRINTS" id="PR00368">
    <property type="entry name" value="FADPNR"/>
</dbReference>
<dbReference type="PRINTS" id="PR00469">
    <property type="entry name" value="PNDRDTASEII"/>
</dbReference>
<dbReference type="SUPFAM" id="SSF51905">
    <property type="entry name" value="FAD/NAD(P)-binding domain"/>
    <property type="match status" value="1"/>
</dbReference>
<proteinExistence type="inferred from homology"/>
<protein>
    <recommendedName>
        <fullName evidence="1">Ferredoxin--NADP reductase</fullName>
        <shortName evidence="1">FNR</shortName>
        <shortName evidence="1">Fd-NADP(+) reductase</shortName>
        <ecNumber evidence="1">1.18.1.2</ecNumber>
    </recommendedName>
</protein>
<comment type="catalytic activity">
    <reaction evidence="1">
        <text>2 reduced [2Fe-2S]-[ferredoxin] + NADP(+) + H(+) = 2 oxidized [2Fe-2S]-[ferredoxin] + NADPH</text>
        <dbReference type="Rhea" id="RHEA:20125"/>
        <dbReference type="Rhea" id="RHEA-COMP:10000"/>
        <dbReference type="Rhea" id="RHEA-COMP:10001"/>
        <dbReference type="ChEBI" id="CHEBI:15378"/>
        <dbReference type="ChEBI" id="CHEBI:33737"/>
        <dbReference type="ChEBI" id="CHEBI:33738"/>
        <dbReference type="ChEBI" id="CHEBI:57783"/>
        <dbReference type="ChEBI" id="CHEBI:58349"/>
        <dbReference type="EC" id="1.18.1.2"/>
    </reaction>
</comment>
<comment type="cofactor">
    <cofactor evidence="1">
        <name>FAD</name>
        <dbReference type="ChEBI" id="CHEBI:57692"/>
    </cofactor>
    <text evidence="1">Binds 1 FAD per subunit.</text>
</comment>
<comment type="subunit">
    <text evidence="1">Homodimer.</text>
</comment>
<comment type="similarity">
    <text evidence="1">Belongs to the ferredoxin--NADP reductase type 2 family.</text>
</comment>
<comment type="sequence caution" evidence="2">
    <conflict type="erroneous initiation">
        <sequence resource="EMBL-CDS" id="ACA82122"/>
    </conflict>
</comment>